<gene>
    <name evidence="7" type="primary">Pfas</name>
    <name evidence="7" type="synonym">ade2</name>
    <name evidence="7" type="ORF">CG9127</name>
</gene>
<accession>P35421</accession>
<accession>A4V099</accession>
<accession>Q6NNY9</accession>
<accession>Q9VMI7</accession>
<dbReference type="EC" id="6.3.5.3" evidence="5"/>
<dbReference type="EMBL" id="U00683">
    <property type="protein sequence ID" value="AAC46468.1"/>
    <property type="molecule type" value="Unassigned_DNA"/>
</dbReference>
<dbReference type="EMBL" id="AE014134">
    <property type="protein sequence ID" value="AAF52329.1"/>
    <property type="molecule type" value="Genomic_DNA"/>
</dbReference>
<dbReference type="EMBL" id="AE014134">
    <property type="protein sequence ID" value="AAN10573.1"/>
    <property type="molecule type" value="Genomic_DNA"/>
</dbReference>
<dbReference type="EMBL" id="AE014134">
    <property type="protein sequence ID" value="AAN10574.1"/>
    <property type="molecule type" value="Genomic_DNA"/>
</dbReference>
<dbReference type="EMBL" id="BT011143">
    <property type="protein sequence ID" value="AAR82811.1"/>
    <property type="molecule type" value="mRNA"/>
</dbReference>
<dbReference type="PIR" id="T13363">
    <property type="entry name" value="T13363"/>
</dbReference>
<dbReference type="RefSeq" id="NP_477212.1">
    <property type="nucleotide sequence ID" value="NM_057864.4"/>
</dbReference>
<dbReference type="RefSeq" id="NP_723146.1">
    <property type="nucleotide sequence ID" value="NM_164675.2"/>
</dbReference>
<dbReference type="RefSeq" id="NP_723147.1">
    <property type="nucleotide sequence ID" value="NM_164676.2"/>
</dbReference>
<dbReference type="SMR" id="P35421"/>
<dbReference type="BioGRID" id="60012">
    <property type="interactions" value="4"/>
</dbReference>
<dbReference type="DIP" id="DIP-22769N"/>
<dbReference type="FunCoup" id="P35421">
    <property type="interactions" value="2120"/>
</dbReference>
<dbReference type="IntAct" id="P35421">
    <property type="interactions" value="2"/>
</dbReference>
<dbReference type="STRING" id="7227.FBpp0078851"/>
<dbReference type="GlyGen" id="P35421">
    <property type="glycosylation" value="1 site"/>
</dbReference>
<dbReference type="PaxDb" id="7227-FBpp0078850"/>
<dbReference type="EnsemblMetazoa" id="FBtr0079219">
    <property type="protein sequence ID" value="FBpp0078850"/>
    <property type="gene ID" value="FBgn0000052"/>
</dbReference>
<dbReference type="EnsemblMetazoa" id="FBtr0079220">
    <property type="protein sequence ID" value="FBpp0078851"/>
    <property type="gene ID" value="FBgn0000052"/>
</dbReference>
<dbReference type="EnsemblMetazoa" id="FBtr0079221">
    <property type="protein sequence ID" value="FBpp0078852"/>
    <property type="gene ID" value="FBgn0000052"/>
</dbReference>
<dbReference type="GeneID" id="33847"/>
<dbReference type="KEGG" id="dme:Dmel_CG9127"/>
<dbReference type="AGR" id="FB:FBgn0000052"/>
<dbReference type="CTD" id="5198"/>
<dbReference type="FlyBase" id="FBgn0000052">
    <property type="gene designation" value="Pfas"/>
</dbReference>
<dbReference type="VEuPathDB" id="VectorBase:FBgn0000052"/>
<dbReference type="eggNOG" id="KOG1907">
    <property type="taxonomic scope" value="Eukaryota"/>
</dbReference>
<dbReference type="GeneTree" id="ENSGT00390000007600"/>
<dbReference type="HOGENOM" id="CLU_001031_0_0_1"/>
<dbReference type="InParanoid" id="P35421"/>
<dbReference type="OMA" id="LSANWMW"/>
<dbReference type="OrthoDB" id="6666987at2759"/>
<dbReference type="PhylomeDB" id="P35421"/>
<dbReference type="Reactome" id="R-DME-73817">
    <property type="pathway name" value="Purine ribonucleoside monophosphate biosynthesis"/>
</dbReference>
<dbReference type="SignaLink" id="P35421"/>
<dbReference type="UniPathway" id="UPA00074">
    <property type="reaction ID" value="UER00128"/>
</dbReference>
<dbReference type="BioGRID-ORCS" id="33847">
    <property type="hits" value="0 hits in 1 CRISPR screen"/>
</dbReference>
<dbReference type="GenomeRNAi" id="33847"/>
<dbReference type="PRO" id="PR:P35421"/>
<dbReference type="Proteomes" id="UP000000803">
    <property type="component" value="Chromosome 2L"/>
</dbReference>
<dbReference type="Bgee" id="FBgn0000052">
    <property type="expression patterns" value="Expressed in fat body cell in dorsal vessel heart and 93 other cell types or tissues"/>
</dbReference>
<dbReference type="GO" id="GO:0005737">
    <property type="term" value="C:cytoplasm"/>
    <property type="evidence" value="ECO:0000250"/>
    <property type="project" value="FlyBase"/>
</dbReference>
<dbReference type="GO" id="GO:0005524">
    <property type="term" value="F:ATP binding"/>
    <property type="evidence" value="ECO:0007669"/>
    <property type="project" value="UniProtKB-KW"/>
</dbReference>
<dbReference type="GO" id="GO:0046872">
    <property type="term" value="F:metal ion binding"/>
    <property type="evidence" value="ECO:0007669"/>
    <property type="project" value="UniProtKB-KW"/>
</dbReference>
<dbReference type="GO" id="GO:0004642">
    <property type="term" value="F:phosphoribosylformylglycinamidine synthase activity"/>
    <property type="evidence" value="ECO:0000315"/>
    <property type="project" value="UniProtKB"/>
</dbReference>
<dbReference type="GO" id="GO:0006189">
    <property type="term" value="P:'de novo' IMP biosynthetic process"/>
    <property type="evidence" value="ECO:0007669"/>
    <property type="project" value="UniProtKB-UniPathway"/>
</dbReference>
<dbReference type="GO" id="GO:0009113">
    <property type="term" value="P:purine nucleobase biosynthetic process"/>
    <property type="evidence" value="ECO:0000315"/>
    <property type="project" value="UniProtKB"/>
</dbReference>
<dbReference type="GO" id="GO:0006164">
    <property type="term" value="P:purine nucleotide biosynthetic process"/>
    <property type="evidence" value="ECO:0000250"/>
    <property type="project" value="FlyBase"/>
</dbReference>
<dbReference type="CDD" id="cd01740">
    <property type="entry name" value="GATase1_FGAR_AT"/>
    <property type="match status" value="1"/>
</dbReference>
<dbReference type="CDD" id="cd02203">
    <property type="entry name" value="PurL_repeat1"/>
    <property type="match status" value="1"/>
</dbReference>
<dbReference type="CDD" id="cd02204">
    <property type="entry name" value="PurL_repeat2"/>
    <property type="match status" value="1"/>
</dbReference>
<dbReference type="FunFam" id="3.40.50.880:FF:000008">
    <property type="entry name" value="Phosphoribosylformylglycinamidine synthase"/>
    <property type="match status" value="1"/>
</dbReference>
<dbReference type="FunFam" id="3.90.650.10:FF:000024">
    <property type="entry name" value="Phosphoribosylformylglycinamidine synthase"/>
    <property type="match status" value="1"/>
</dbReference>
<dbReference type="FunFam" id="3.30.1330.10:FF:000026">
    <property type="entry name" value="phosphoribosylformylglycinamidine synthase"/>
    <property type="match status" value="1"/>
</dbReference>
<dbReference type="FunFam" id="3.30.1330.10:FF:000007">
    <property type="entry name" value="Phosphoribosylformylglycinamidine synthase, putative"/>
    <property type="match status" value="1"/>
</dbReference>
<dbReference type="FunFam" id="1.10.8.750:FF:000001">
    <property type="entry name" value="Putative phosphoribosylformylglycinamidine synthase"/>
    <property type="match status" value="1"/>
</dbReference>
<dbReference type="Gene3D" id="3.40.50.880">
    <property type="match status" value="1"/>
</dbReference>
<dbReference type="Gene3D" id="1.10.8.750">
    <property type="entry name" value="Phosphoribosylformylglycinamidine synthase, linker domain"/>
    <property type="match status" value="1"/>
</dbReference>
<dbReference type="Gene3D" id="3.90.650.10">
    <property type="entry name" value="PurM-like C-terminal domain"/>
    <property type="match status" value="2"/>
</dbReference>
<dbReference type="Gene3D" id="3.30.1330.10">
    <property type="entry name" value="PurM-like, N-terminal domain"/>
    <property type="match status" value="2"/>
</dbReference>
<dbReference type="HAMAP" id="MF_00419">
    <property type="entry name" value="PurL_1"/>
    <property type="match status" value="1"/>
</dbReference>
<dbReference type="InterPro" id="IPR029062">
    <property type="entry name" value="Class_I_gatase-like"/>
</dbReference>
<dbReference type="InterPro" id="IPR040707">
    <property type="entry name" value="FGAR-AT_N"/>
</dbReference>
<dbReference type="InterPro" id="IPR055181">
    <property type="entry name" value="FGAR-AT_PurM_N-like"/>
</dbReference>
<dbReference type="InterPro" id="IPR010073">
    <property type="entry name" value="PurL_large"/>
</dbReference>
<dbReference type="InterPro" id="IPR041609">
    <property type="entry name" value="PurL_linker"/>
</dbReference>
<dbReference type="InterPro" id="IPR010918">
    <property type="entry name" value="PurM-like_C_dom"/>
</dbReference>
<dbReference type="InterPro" id="IPR036676">
    <property type="entry name" value="PurM-like_C_sf"/>
</dbReference>
<dbReference type="InterPro" id="IPR016188">
    <property type="entry name" value="PurM-like_N"/>
</dbReference>
<dbReference type="InterPro" id="IPR036921">
    <property type="entry name" value="PurM-like_N_sf"/>
</dbReference>
<dbReference type="InterPro" id="IPR036604">
    <property type="entry name" value="PurS-like_sf"/>
</dbReference>
<dbReference type="NCBIfam" id="TIGR01735">
    <property type="entry name" value="FGAM_synt"/>
    <property type="match status" value="1"/>
</dbReference>
<dbReference type="NCBIfam" id="NF003672">
    <property type="entry name" value="PRK05297.1"/>
    <property type="match status" value="1"/>
</dbReference>
<dbReference type="PANTHER" id="PTHR10099">
    <property type="entry name" value="PHOSPHORIBOSYLFORMYLGLYCINAMIDINE SYNTHASE"/>
    <property type="match status" value="1"/>
</dbReference>
<dbReference type="PANTHER" id="PTHR10099:SF1">
    <property type="entry name" value="PHOSPHORIBOSYLFORMYLGLYCINAMIDINE SYNTHASE"/>
    <property type="match status" value="1"/>
</dbReference>
<dbReference type="Pfam" id="PF00586">
    <property type="entry name" value="AIRS"/>
    <property type="match status" value="1"/>
</dbReference>
<dbReference type="Pfam" id="PF02769">
    <property type="entry name" value="AIRS_C"/>
    <property type="match status" value="2"/>
</dbReference>
<dbReference type="Pfam" id="PF18072">
    <property type="entry name" value="FGAR-AT_linker"/>
    <property type="match status" value="1"/>
</dbReference>
<dbReference type="Pfam" id="PF18076">
    <property type="entry name" value="FGAR-AT_N"/>
    <property type="match status" value="1"/>
</dbReference>
<dbReference type="Pfam" id="PF22689">
    <property type="entry name" value="FGAR-AT_PurM_N-like"/>
    <property type="match status" value="1"/>
</dbReference>
<dbReference type="Pfam" id="PF13507">
    <property type="entry name" value="GATase_5"/>
    <property type="match status" value="1"/>
</dbReference>
<dbReference type="SMART" id="SM01211">
    <property type="entry name" value="GATase_5"/>
    <property type="match status" value="1"/>
</dbReference>
<dbReference type="SUPFAM" id="SSF52317">
    <property type="entry name" value="Class I glutamine amidotransferase-like"/>
    <property type="match status" value="1"/>
</dbReference>
<dbReference type="SUPFAM" id="SSF109736">
    <property type="entry name" value="FGAM synthase PurL, linker domain"/>
    <property type="match status" value="1"/>
</dbReference>
<dbReference type="SUPFAM" id="SSF56042">
    <property type="entry name" value="PurM C-terminal domain-like"/>
    <property type="match status" value="2"/>
</dbReference>
<dbReference type="SUPFAM" id="SSF55326">
    <property type="entry name" value="PurM N-terminal domain-like"/>
    <property type="match status" value="2"/>
</dbReference>
<dbReference type="SUPFAM" id="SSF82697">
    <property type="entry name" value="PurS-like"/>
    <property type="match status" value="1"/>
</dbReference>
<dbReference type="PROSITE" id="PS51273">
    <property type="entry name" value="GATASE_TYPE_1"/>
    <property type="match status" value="1"/>
</dbReference>
<organism>
    <name type="scientific">Drosophila melanogaster</name>
    <name type="common">Fruit fly</name>
    <dbReference type="NCBI Taxonomy" id="7227"/>
    <lineage>
        <taxon>Eukaryota</taxon>
        <taxon>Metazoa</taxon>
        <taxon>Ecdysozoa</taxon>
        <taxon>Arthropoda</taxon>
        <taxon>Hexapoda</taxon>
        <taxon>Insecta</taxon>
        <taxon>Pterygota</taxon>
        <taxon>Neoptera</taxon>
        <taxon>Endopterygota</taxon>
        <taxon>Diptera</taxon>
        <taxon>Brachycera</taxon>
        <taxon>Muscomorpha</taxon>
        <taxon>Ephydroidea</taxon>
        <taxon>Drosophilidae</taxon>
        <taxon>Drosophila</taxon>
        <taxon>Sophophora</taxon>
    </lineage>
</organism>
<feature type="chain" id="PRO_0000100403" description="Phosphoribosylformylglycinamidine synthase">
    <location>
        <begin position="1"/>
        <end position="1354"/>
    </location>
</feature>
<feature type="domain" description="Glutamine amidotransferase type-1">
    <location>
        <begin position="1087"/>
        <end position="1337"/>
    </location>
</feature>
<feature type="active site" description="Nucleophile" evidence="1">
    <location>
        <position position="1180"/>
    </location>
</feature>
<feature type="active site" evidence="1">
    <location>
        <position position="1310"/>
    </location>
</feature>
<feature type="active site" evidence="1">
    <location>
        <position position="1312"/>
    </location>
</feature>
<feature type="binding site" evidence="2">
    <location>
        <begin position="327"/>
        <end position="338"/>
    </location>
    <ligand>
        <name>ATP</name>
        <dbReference type="ChEBI" id="CHEBI:30616"/>
    </ligand>
</feature>
<feature type="binding site" evidence="1">
    <location>
        <begin position="407"/>
        <end position="409"/>
    </location>
    <ligand>
        <name>ATP</name>
        <dbReference type="ChEBI" id="CHEBI:30616"/>
    </ligand>
</feature>
<feature type="binding site" evidence="1">
    <location>
        <position position="714"/>
    </location>
    <ligand>
        <name>ATP</name>
        <dbReference type="ChEBI" id="CHEBI:30616"/>
    </ligand>
</feature>
<feature type="binding site" evidence="1">
    <location>
        <position position="715"/>
    </location>
    <ligand>
        <name>Mg(2+)</name>
        <dbReference type="ChEBI" id="CHEBI:18420"/>
    </ligand>
</feature>
<feature type="binding site" evidence="1">
    <location>
        <position position="754"/>
    </location>
    <ligand>
        <name>Mg(2+)</name>
        <dbReference type="ChEBI" id="CHEBI:18420"/>
    </ligand>
</feature>
<feature type="binding site" evidence="1">
    <location>
        <position position="758"/>
    </location>
    <ligand>
        <name>Mg(2+)</name>
        <dbReference type="ChEBI" id="CHEBI:18420"/>
    </ligand>
</feature>
<feature type="binding site" evidence="1">
    <location>
        <position position="918"/>
    </location>
    <ligand>
        <name>Mg(2+)</name>
        <dbReference type="ChEBI" id="CHEBI:18420"/>
    </ligand>
</feature>
<feature type="binding site" evidence="1">
    <location>
        <position position="920"/>
    </location>
    <ligand>
        <name>ATP</name>
        <dbReference type="ChEBI" id="CHEBI:30616"/>
    </ligand>
</feature>
<feature type="sequence conflict" description="In Ref. 1; AAC46468." evidence="6" ref="1">
    <original>I</original>
    <variation>Y</variation>
    <location>
        <position position="558"/>
    </location>
</feature>
<feature type="sequence conflict" description="In Ref. 1; AAC46468." evidence="6" ref="1">
    <original>S</original>
    <variation>F</variation>
    <location>
        <position position="625"/>
    </location>
</feature>
<feature type="sequence conflict" description="In Ref. 4; AAR82811." evidence="6" ref="4">
    <original>E</original>
    <variation>V</variation>
    <location>
        <position position="766"/>
    </location>
</feature>
<feature type="sequence conflict" description="In Ref. 4; AAR82811." evidence="6" ref="4">
    <original>D</original>
    <variation>E</variation>
    <location>
        <position position="910"/>
    </location>
</feature>
<reference key="1">
    <citation type="journal article" date="1993" name="Genome">
        <title>The adenosine2 gene of Drosophila melanogaster encodes a formylglycineamide ribotide amidotransferase.</title>
        <authorList>
            <person name="Tiong S.Y.K."/>
            <person name="Nash D."/>
        </authorList>
    </citation>
    <scope>NUCLEOTIDE SEQUENCE [GENOMIC DNA]</scope>
    <source>
        <strain>Oregon-R</strain>
    </source>
</reference>
<reference key="2">
    <citation type="journal article" date="2000" name="Science">
        <title>The genome sequence of Drosophila melanogaster.</title>
        <authorList>
            <person name="Adams M.D."/>
            <person name="Celniker S.E."/>
            <person name="Holt R.A."/>
            <person name="Evans C.A."/>
            <person name="Gocayne J.D."/>
            <person name="Amanatides P.G."/>
            <person name="Scherer S.E."/>
            <person name="Li P.W."/>
            <person name="Hoskins R.A."/>
            <person name="Galle R.F."/>
            <person name="George R.A."/>
            <person name="Lewis S.E."/>
            <person name="Richards S."/>
            <person name="Ashburner M."/>
            <person name="Henderson S.N."/>
            <person name="Sutton G.G."/>
            <person name="Wortman J.R."/>
            <person name="Yandell M.D."/>
            <person name="Zhang Q."/>
            <person name="Chen L.X."/>
            <person name="Brandon R.C."/>
            <person name="Rogers Y.-H.C."/>
            <person name="Blazej R.G."/>
            <person name="Champe M."/>
            <person name="Pfeiffer B.D."/>
            <person name="Wan K.H."/>
            <person name="Doyle C."/>
            <person name="Baxter E.G."/>
            <person name="Helt G."/>
            <person name="Nelson C.R."/>
            <person name="Miklos G.L.G."/>
            <person name="Abril J.F."/>
            <person name="Agbayani A."/>
            <person name="An H.-J."/>
            <person name="Andrews-Pfannkoch C."/>
            <person name="Baldwin D."/>
            <person name="Ballew R.M."/>
            <person name="Basu A."/>
            <person name="Baxendale J."/>
            <person name="Bayraktaroglu L."/>
            <person name="Beasley E.M."/>
            <person name="Beeson K.Y."/>
            <person name="Benos P.V."/>
            <person name="Berman B.P."/>
            <person name="Bhandari D."/>
            <person name="Bolshakov S."/>
            <person name="Borkova D."/>
            <person name="Botchan M.R."/>
            <person name="Bouck J."/>
            <person name="Brokstein P."/>
            <person name="Brottier P."/>
            <person name="Burtis K.C."/>
            <person name="Busam D.A."/>
            <person name="Butler H."/>
            <person name="Cadieu E."/>
            <person name="Center A."/>
            <person name="Chandra I."/>
            <person name="Cherry J.M."/>
            <person name="Cawley S."/>
            <person name="Dahlke C."/>
            <person name="Davenport L.B."/>
            <person name="Davies P."/>
            <person name="de Pablos B."/>
            <person name="Delcher A."/>
            <person name="Deng Z."/>
            <person name="Mays A.D."/>
            <person name="Dew I."/>
            <person name="Dietz S.M."/>
            <person name="Dodson K."/>
            <person name="Doup L.E."/>
            <person name="Downes M."/>
            <person name="Dugan-Rocha S."/>
            <person name="Dunkov B.C."/>
            <person name="Dunn P."/>
            <person name="Durbin K.J."/>
            <person name="Evangelista C.C."/>
            <person name="Ferraz C."/>
            <person name="Ferriera S."/>
            <person name="Fleischmann W."/>
            <person name="Fosler C."/>
            <person name="Gabrielian A.E."/>
            <person name="Garg N.S."/>
            <person name="Gelbart W.M."/>
            <person name="Glasser K."/>
            <person name="Glodek A."/>
            <person name="Gong F."/>
            <person name="Gorrell J.H."/>
            <person name="Gu Z."/>
            <person name="Guan P."/>
            <person name="Harris M."/>
            <person name="Harris N.L."/>
            <person name="Harvey D.A."/>
            <person name="Heiman T.J."/>
            <person name="Hernandez J.R."/>
            <person name="Houck J."/>
            <person name="Hostin D."/>
            <person name="Houston K.A."/>
            <person name="Howland T.J."/>
            <person name="Wei M.-H."/>
            <person name="Ibegwam C."/>
            <person name="Jalali M."/>
            <person name="Kalush F."/>
            <person name="Karpen G.H."/>
            <person name="Ke Z."/>
            <person name="Kennison J.A."/>
            <person name="Ketchum K.A."/>
            <person name="Kimmel B.E."/>
            <person name="Kodira C.D."/>
            <person name="Kraft C.L."/>
            <person name="Kravitz S."/>
            <person name="Kulp D."/>
            <person name="Lai Z."/>
            <person name="Lasko P."/>
            <person name="Lei Y."/>
            <person name="Levitsky A.A."/>
            <person name="Li J.H."/>
            <person name="Li Z."/>
            <person name="Liang Y."/>
            <person name="Lin X."/>
            <person name="Liu X."/>
            <person name="Mattei B."/>
            <person name="McIntosh T.C."/>
            <person name="McLeod M.P."/>
            <person name="McPherson D."/>
            <person name="Merkulov G."/>
            <person name="Milshina N.V."/>
            <person name="Mobarry C."/>
            <person name="Morris J."/>
            <person name="Moshrefi A."/>
            <person name="Mount S.M."/>
            <person name="Moy M."/>
            <person name="Murphy B."/>
            <person name="Murphy L."/>
            <person name="Muzny D.M."/>
            <person name="Nelson D.L."/>
            <person name="Nelson D.R."/>
            <person name="Nelson K.A."/>
            <person name="Nixon K."/>
            <person name="Nusskern D.R."/>
            <person name="Pacleb J.M."/>
            <person name="Palazzolo M."/>
            <person name="Pittman G.S."/>
            <person name="Pan S."/>
            <person name="Pollard J."/>
            <person name="Puri V."/>
            <person name="Reese M.G."/>
            <person name="Reinert K."/>
            <person name="Remington K."/>
            <person name="Saunders R.D.C."/>
            <person name="Scheeler F."/>
            <person name="Shen H."/>
            <person name="Shue B.C."/>
            <person name="Siden-Kiamos I."/>
            <person name="Simpson M."/>
            <person name="Skupski M.P."/>
            <person name="Smith T.J."/>
            <person name="Spier E."/>
            <person name="Spradling A.C."/>
            <person name="Stapleton M."/>
            <person name="Strong R."/>
            <person name="Sun E."/>
            <person name="Svirskas R."/>
            <person name="Tector C."/>
            <person name="Turner R."/>
            <person name="Venter E."/>
            <person name="Wang A.H."/>
            <person name="Wang X."/>
            <person name="Wang Z.-Y."/>
            <person name="Wassarman D.A."/>
            <person name="Weinstock G.M."/>
            <person name="Weissenbach J."/>
            <person name="Williams S.M."/>
            <person name="Woodage T."/>
            <person name="Worley K.C."/>
            <person name="Wu D."/>
            <person name="Yang S."/>
            <person name="Yao Q.A."/>
            <person name="Ye J."/>
            <person name="Yeh R.-F."/>
            <person name="Zaveri J.S."/>
            <person name="Zhan M."/>
            <person name="Zhang G."/>
            <person name="Zhao Q."/>
            <person name="Zheng L."/>
            <person name="Zheng X.H."/>
            <person name="Zhong F.N."/>
            <person name="Zhong W."/>
            <person name="Zhou X."/>
            <person name="Zhu S.C."/>
            <person name="Zhu X."/>
            <person name="Smith H.O."/>
            <person name="Gibbs R.A."/>
            <person name="Myers E.W."/>
            <person name="Rubin G.M."/>
            <person name="Venter J.C."/>
        </authorList>
    </citation>
    <scope>NUCLEOTIDE SEQUENCE [LARGE SCALE GENOMIC DNA]</scope>
    <source>
        <strain>Berkeley</strain>
    </source>
</reference>
<reference key="3">
    <citation type="journal article" date="2002" name="Genome Biol.">
        <title>Annotation of the Drosophila melanogaster euchromatic genome: a systematic review.</title>
        <authorList>
            <person name="Misra S."/>
            <person name="Crosby M.A."/>
            <person name="Mungall C.J."/>
            <person name="Matthews B.B."/>
            <person name="Campbell K.S."/>
            <person name="Hradecky P."/>
            <person name="Huang Y."/>
            <person name="Kaminker J.S."/>
            <person name="Millburn G.H."/>
            <person name="Prochnik S.E."/>
            <person name="Smith C.D."/>
            <person name="Tupy J.L."/>
            <person name="Whitfield E.J."/>
            <person name="Bayraktaroglu L."/>
            <person name="Berman B.P."/>
            <person name="Bettencourt B.R."/>
            <person name="Celniker S.E."/>
            <person name="de Grey A.D.N.J."/>
            <person name="Drysdale R.A."/>
            <person name="Harris N.L."/>
            <person name="Richter J."/>
            <person name="Russo S."/>
            <person name="Schroeder A.J."/>
            <person name="Shu S.Q."/>
            <person name="Stapleton M."/>
            <person name="Yamada C."/>
            <person name="Ashburner M."/>
            <person name="Gelbart W.M."/>
            <person name="Rubin G.M."/>
            <person name="Lewis S.E."/>
        </authorList>
    </citation>
    <scope>GENOME REANNOTATION</scope>
    <source>
        <strain>Berkeley</strain>
    </source>
</reference>
<reference key="4">
    <citation type="submission" date="2003-12" db="EMBL/GenBank/DDBJ databases">
        <authorList>
            <person name="Stapleton M."/>
            <person name="Brokstein P."/>
            <person name="Hong L."/>
            <person name="Agbayani A."/>
            <person name="Carlson J.W."/>
            <person name="Champe M."/>
            <person name="Chavez C."/>
            <person name="Dorsett V."/>
            <person name="Dresnek D."/>
            <person name="Farfan D."/>
            <person name="Frise E."/>
            <person name="George R.A."/>
            <person name="Gonzalez M."/>
            <person name="Guarin H."/>
            <person name="Kronmiller B."/>
            <person name="Li P.W."/>
            <person name="Liao G."/>
            <person name="Miranda A."/>
            <person name="Mungall C.J."/>
            <person name="Nunoo J."/>
            <person name="Pacleb J.M."/>
            <person name="Paragas V."/>
            <person name="Park S."/>
            <person name="Patel S."/>
            <person name="Phouanenavong S."/>
            <person name="Wan K.H."/>
            <person name="Yu C."/>
            <person name="Lewis S.E."/>
            <person name="Rubin G.M."/>
            <person name="Celniker S.E."/>
        </authorList>
    </citation>
    <scope>NUCLEOTIDE SEQUENCE [LARGE SCALE MRNA]</scope>
    <source>
        <strain>Berkeley</strain>
        <tissue>Ovary</tissue>
    </source>
</reference>
<reference key="5">
    <citation type="journal article" date="1986" name="Proc. Natl. Acad. Sci. U.S.A.">
        <title>Two Drosophila melanogaster mutations block successive steps of de novo purine synthesis.</title>
        <authorList>
            <person name="Henikoff S."/>
            <person name="Nash D."/>
            <person name="Hards R."/>
            <person name="Bleskan J."/>
            <person name="Woolford J.F."/>
            <person name="Naguib F."/>
            <person name="Patterson D."/>
        </authorList>
    </citation>
    <scope>FUNCTION</scope>
    <scope>CATALYTIC ACTIVITY</scope>
    <scope>PATHWAY</scope>
</reference>
<reference key="6">
    <citation type="journal article" date="2011" name="Genetics">
        <title>A link between impaired purine nucleotide synthesis and apoptosis in Drosophila melanogaster.</title>
        <authorList>
            <person name="Holland C."/>
            <person name="Lipsett D.B."/>
            <person name="Clark D.V."/>
        </authorList>
    </citation>
    <scope>DISRUPTION PHENOTYPE</scope>
</reference>
<reference key="7">
    <citation type="journal article" date="2018" name="G3 (Bethesda)">
        <title>Ade2 Functions in the Drosophila Fat Body To Promote Sleep.</title>
        <authorList>
            <person name="Yurgel M.E."/>
            <person name="Shah K.D."/>
            <person name="Brown E.B."/>
            <person name="Burns C."/>
            <person name="Bennick R.A."/>
            <person name="DiAngelo J.R."/>
            <person name="Keene A.C."/>
        </authorList>
    </citation>
    <scope>DISRUPTION PHENOTYPE</scope>
</reference>
<comment type="function">
    <text evidence="5">Phosphoribosylformylglycinamidine synthase involved in the purines biosynthetic pathway (PubMed:3086869). Catalyzes the ATP-dependent conversion of formylglycinamide ribonucleotide (FGAR) and glutamine to yield formylglycinamidine ribonucleotide (FGAM) and glutamate (PubMed:3086869). Because of its role in metabolisms, is involved in sleep regulation (PubMed:3086869).</text>
</comment>
<comment type="catalytic activity">
    <reaction evidence="5">
        <text>N(2)-formyl-N(1)-(5-phospho-beta-D-ribosyl)glycinamide + L-glutamine + ATP + H2O = 2-formamido-N(1)-(5-O-phospho-beta-D-ribosyl)acetamidine + L-glutamate + ADP + phosphate + H(+)</text>
        <dbReference type="Rhea" id="RHEA:17129"/>
        <dbReference type="ChEBI" id="CHEBI:15377"/>
        <dbReference type="ChEBI" id="CHEBI:15378"/>
        <dbReference type="ChEBI" id="CHEBI:29985"/>
        <dbReference type="ChEBI" id="CHEBI:30616"/>
        <dbReference type="ChEBI" id="CHEBI:43474"/>
        <dbReference type="ChEBI" id="CHEBI:58359"/>
        <dbReference type="ChEBI" id="CHEBI:147286"/>
        <dbReference type="ChEBI" id="CHEBI:147287"/>
        <dbReference type="ChEBI" id="CHEBI:456216"/>
        <dbReference type="EC" id="6.3.5.3"/>
    </reaction>
</comment>
<comment type="pathway">
    <text evidence="5">Purine metabolism; IMP biosynthesis via de novo pathway; 5-amino-1-(5-phospho-D-ribosyl)imidazole from N(2)-formyl-N(1)-(5-phospho-D-ribosyl)glycinamide: step 1/2.</text>
</comment>
<comment type="disruption phenotype">
    <text evidence="3 4">Pupal lethal (PubMed:21441212). RNAi-mediated knockdown in the fat body reduces energy storage of both triglyceride and free glucose, increases waking activity during the day and the night, reduces sleep bout length, with total sleep bout number reduced during the day and increased during the night (PubMed:30249751).</text>
</comment>
<comment type="similarity">
    <text evidence="6">In the N-terminal section; belongs to the FGAMS family.</text>
</comment>
<protein>
    <recommendedName>
        <fullName evidence="7">Phosphoribosylformylglycinamidine synthase</fullName>
        <shortName>FGAM synthase</shortName>
        <shortName>FGAMS</shortName>
        <ecNumber evidence="5">6.3.5.3</ecNumber>
    </recommendedName>
    <alternativeName>
        <fullName>Formylglycinamide ribonucleotide amidotransferase</fullName>
        <shortName>FGAR amidotransferase</shortName>
        <shortName>FGAR-AT</shortName>
    </alternativeName>
    <alternativeName>
        <fullName>Formylglycinamide ribotide amidotransferase</fullName>
    </alternativeName>
    <alternativeName>
        <fullName>Protein adenosine-2</fullName>
    </alternativeName>
</protein>
<name>PUR4_DROME</name>
<proteinExistence type="evidence at protein level"/>
<keyword id="KW-0067">ATP-binding</keyword>
<keyword id="KW-0315">Glutamine amidotransferase</keyword>
<keyword id="KW-0436">Ligase</keyword>
<keyword id="KW-0460">Magnesium</keyword>
<keyword id="KW-0479">Metal-binding</keyword>
<keyword id="KW-0547">Nucleotide-binding</keyword>
<keyword id="KW-0658">Purine biosynthesis</keyword>
<keyword id="KW-1185">Reference proteome</keyword>
<evidence type="ECO:0000250" key="1"/>
<evidence type="ECO:0000255" key="2"/>
<evidence type="ECO:0000269" key="3">
    <source>
    </source>
</evidence>
<evidence type="ECO:0000269" key="4">
    <source>
    </source>
</evidence>
<evidence type="ECO:0000269" key="5">
    <source>
    </source>
</evidence>
<evidence type="ECO:0000305" key="6"/>
<evidence type="ECO:0000312" key="7">
    <source>
        <dbReference type="FlyBase" id="FBgn0000052"/>
    </source>
</evidence>
<sequence>MVILRYYDVQAHSAAEEESVLRRLREEDGAVVSVRMERCYHLEYSAQAEHSLALDELLVWLVKQPLSKGQSLSRQPALQSTGSSQLLLEIGPRFNFSTPYSTNCVNIFQNLGYSEVRRMETSTRYLVTFGEGSKAPEAARFVPLLGDRMTQCLYTEENTPKASFDEQLPERQANWHFVPVLEEGRAALERINQELGLAFNDYDLDYYHDLFAKELGRNPTTVELFDCAQSNSEHSRHWFFRGRMVIDGVEQPKSLIRMIMDTQAHTNPNNTIKFSDNSSAMVGFDHQTIVPSSVVAPGAVRLQSVQSDLIFTAETHNMPTAVAPFSGATTGTGGRLRDVQGVGRGGVPIAGTAGYCVGALHIPGYKQPYEPLDFKYPATFAPPLQVLIEASNGASDYGNKFGEPVISGFALSYGLNSAADASQRDEYVKPIMFSGGLGTMPATMREKLPPARGQLLAKIGGPVYRIGVGGGAASSVEIQGSGDAELDFNAVQRGDAEMENKLNRVVRACLDLGEQNPILAIHDQGAGGNGNVLKELVEPGFAGAVIFSKEFQLGDPTITALELWGAEYQENNAILCNADQRELLEKICRRERCPISFVGVVTGDGRVTLLEKPAPKDLEQALNASNRSEVSPFDLELKYVLGDMPKRTYDLKREQTPLKELSLPKGLLLDEALERVLSLVAVGSKRFLTNKVDRCVGGLIAQQQCVGPLQAPLADYALTTVSHFSHSGIATSIGTQPLKGLLDPAAMARMCVAEALSNLVFVKISELADVKCSGNWMWAAKLPGEGARMFDACKELCQILEELHIAIDGGKDSLSMAAKVGGETIKSPGTLVISTYAPCPDVRLKVTPDLKGPGAGSKTSLLWINLENSARLGGSALAQAYAQQGKDTPNLTRSDVLGKAFAVTQSLLGDGLIQAGHDVSDGGLLVCVLEMAIGGLSGLRVDLSEPLAKLKNFDKSVEKLNRPELAVLFAEECGWVVEVLDTDLERVRSTYEKAGVPNYYLGVTEGFGLDSRVVLKNGKSELLDQPLRVLYKKWERTSYELEKLQANPECAEAEYNSLEYRQAPQYRGPQNVQAELTLKRSSAPVRVAVLREEGVNSEREMMACLLRANFEVHDVTMSDLLQGTASVSQYRGLIFPGGFSYADTLGSAKGWAANILHNPRLLPQFEAFKRRQDVFSLGICNGCQLMTLIGFVGSAKSEVGADPDVALLHNKSQRFECRWATVKIPSNRSIMLGSMKDLVLGCWVAHGEGRFAFRDEKLISHLQSEQLVTLQYVDDVGKPTELYPLNPNGSPQGIAGLCSSDGRHLALMPHPERCSSMYQWPYVPSSFEVSPTQSESPWQIMFNNAYNWCVKSNQ</sequence>